<accession>B7JC17</accession>
<proteinExistence type="inferred from homology"/>
<protein>
    <recommendedName>
        <fullName evidence="1">Nucleoid-associated protein AFE_1920</fullName>
    </recommendedName>
</protein>
<evidence type="ECO:0000255" key="1">
    <source>
        <dbReference type="HAMAP-Rule" id="MF_00274"/>
    </source>
</evidence>
<sequence>MKGGLGNIMKQAQQLQERLQKTQEELAQVEVQGHAGGNLVEVTMTCRHDVRRVRIDPSLLTDGDQEMLEDLVAAAINDAVRTAEKVSAERMSEVTGGMNIPGMNLPF</sequence>
<feature type="chain" id="PRO_1000119308" description="Nucleoid-associated protein AFE_1920">
    <location>
        <begin position="1"/>
        <end position="107"/>
    </location>
</feature>
<reference key="1">
    <citation type="journal article" date="2008" name="BMC Genomics">
        <title>Acidithiobacillus ferrooxidans metabolism: from genome sequence to industrial applications.</title>
        <authorList>
            <person name="Valdes J."/>
            <person name="Pedroso I."/>
            <person name="Quatrini R."/>
            <person name="Dodson R.J."/>
            <person name="Tettelin H."/>
            <person name="Blake R. II"/>
            <person name="Eisen J.A."/>
            <person name="Holmes D.S."/>
        </authorList>
    </citation>
    <scope>NUCLEOTIDE SEQUENCE [LARGE SCALE GENOMIC DNA]</scope>
    <source>
        <strain>ATCC 23270 / DSM 14882 / CIP 104768 / NCIMB 8455</strain>
    </source>
</reference>
<comment type="function">
    <text evidence="1">Binds to DNA and alters its conformation. May be involved in regulation of gene expression, nucleoid organization and DNA protection.</text>
</comment>
<comment type="subunit">
    <text evidence="1">Homodimer.</text>
</comment>
<comment type="subcellular location">
    <subcellularLocation>
        <location evidence="1">Cytoplasm</location>
        <location evidence="1">Nucleoid</location>
    </subcellularLocation>
</comment>
<comment type="similarity">
    <text evidence="1">Belongs to the YbaB/EbfC family.</text>
</comment>
<organism>
    <name type="scientific">Acidithiobacillus ferrooxidans (strain ATCC 23270 / DSM 14882 / CIP 104768 / NCIMB 8455)</name>
    <name type="common">Ferrobacillus ferrooxidans (strain ATCC 23270)</name>
    <dbReference type="NCBI Taxonomy" id="243159"/>
    <lineage>
        <taxon>Bacteria</taxon>
        <taxon>Pseudomonadati</taxon>
        <taxon>Pseudomonadota</taxon>
        <taxon>Acidithiobacillia</taxon>
        <taxon>Acidithiobacillales</taxon>
        <taxon>Acidithiobacillaceae</taxon>
        <taxon>Acidithiobacillus</taxon>
    </lineage>
</organism>
<keyword id="KW-0963">Cytoplasm</keyword>
<keyword id="KW-0238">DNA-binding</keyword>
<keyword id="KW-1185">Reference proteome</keyword>
<name>Y1920_ACIF2</name>
<gene>
    <name type="ordered locus">AFE_1920</name>
</gene>
<dbReference type="EMBL" id="CP001219">
    <property type="protein sequence ID" value="ACK79227.1"/>
    <property type="molecule type" value="Genomic_DNA"/>
</dbReference>
<dbReference type="RefSeq" id="WP_012536837.1">
    <property type="nucleotide sequence ID" value="NC_011761.1"/>
</dbReference>
<dbReference type="SMR" id="B7JC17"/>
<dbReference type="STRING" id="243159.AFE_1920"/>
<dbReference type="PaxDb" id="243159-AFE_1920"/>
<dbReference type="GeneID" id="65281073"/>
<dbReference type="KEGG" id="afr:AFE_1920"/>
<dbReference type="eggNOG" id="COG0718">
    <property type="taxonomic scope" value="Bacteria"/>
</dbReference>
<dbReference type="HOGENOM" id="CLU_140930_0_0_6"/>
<dbReference type="Proteomes" id="UP000001362">
    <property type="component" value="Chromosome"/>
</dbReference>
<dbReference type="GO" id="GO:0043590">
    <property type="term" value="C:bacterial nucleoid"/>
    <property type="evidence" value="ECO:0007669"/>
    <property type="project" value="UniProtKB-UniRule"/>
</dbReference>
<dbReference type="GO" id="GO:0005829">
    <property type="term" value="C:cytosol"/>
    <property type="evidence" value="ECO:0007669"/>
    <property type="project" value="TreeGrafter"/>
</dbReference>
<dbReference type="GO" id="GO:0003677">
    <property type="term" value="F:DNA binding"/>
    <property type="evidence" value="ECO:0007669"/>
    <property type="project" value="UniProtKB-UniRule"/>
</dbReference>
<dbReference type="Gene3D" id="3.30.1310.10">
    <property type="entry name" value="Nucleoid-associated protein YbaB-like domain"/>
    <property type="match status" value="1"/>
</dbReference>
<dbReference type="HAMAP" id="MF_00274">
    <property type="entry name" value="DNA_YbaB_EbfC"/>
    <property type="match status" value="1"/>
</dbReference>
<dbReference type="InterPro" id="IPR036894">
    <property type="entry name" value="YbaB-like_sf"/>
</dbReference>
<dbReference type="InterPro" id="IPR004401">
    <property type="entry name" value="YbaB/EbfC"/>
</dbReference>
<dbReference type="NCBIfam" id="TIGR00103">
    <property type="entry name" value="DNA_YbaB_EbfC"/>
    <property type="match status" value="1"/>
</dbReference>
<dbReference type="PANTHER" id="PTHR33449">
    <property type="entry name" value="NUCLEOID-ASSOCIATED PROTEIN YBAB"/>
    <property type="match status" value="1"/>
</dbReference>
<dbReference type="PANTHER" id="PTHR33449:SF1">
    <property type="entry name" value="NUCLEOID-ASSOCIATED PROTEIN YBAB"/>
    <property type="match status" value="1"/>
</dbReference>
<dbReference type="Pfam" id="PF02575">
    <property type="entry name" value="YbaB_DNA_bd"/>
    <property type="match status" value="1"/>
</dbReference>
<dbReference type="PIRSF" id="PIRSF004555">
    <property type="entry name" value="UCP004555"/>
    <property type="match status" value="1"/>
</dbReference>
<dbReference type="SUPFAM" id="SSF82607">
    <property type="entry name" value="YbaB-like"/>
    <property type="match status" value="1"/>
</dbReference>